<proteinExistence type="evidence at transcript level"/>
<accession>P29454</accession>
<name>GSCA_XENLA</name>
<dbReference type="EMBL" id="M63872">
    <property type="protein sequence ID" value="AAA49744.1"/>
    <property type="status" value="ALT_INIT"/>
    <property type="molecule type" value="mRNA"/>
</dbReference>
<dbReference type="PIR" id="B42768">
    <property type="entry name" value="B42768"/>
</dbReference>
<dbReference type="SMR" id="P29454"/>
<dbReference type="AGR" id="Xenbase:XB-GENE-6252605"/>
<dbReference type="Xenbase" id="XB-GENE-6252605">
    <property type="gene designation" value="gsc.L"/>
</dbReference>
<dbReference type="Proteomes" id="UP000186698">
    <property type="component" value="Unplaced"/>
</dbReference>
<dbReference type="GO" id="GO:0005634">
    <property type="term" value="C:nucleus"/>
    <property type="evidence" value="ECO:0000318"/>
    <property type="project" value="GO_Central"/>
</dbReference>
<dbReference type="GO" id="GO:0000981">
    <property type="term" value="F:DNA-binding transcription factor activity, RNA polymerase II-specific"/>
    <property type="evidence" value="ECO:0000318"/>
    <property type="project" value="GO_Central"/>
</dbReference>
<dbReference type="GO" id="GO:0000978">
    <property type="term" value="F:RNA polymerase II cis-regulatory region sequence-specific DNA binding"/>
    <property type="evidence" value="ECO:0000318"/>
    <property type="project" value="GO_Central"/>
</dbReference>
<dbReference type="GO" id="GO:0006357">
    <property type="term" value="P:regulation of transcription by RNA polymerase II"/>
    <property type="evidence" value="ECO:0000318"/>
    <property type="project" value="GO_Central"/>
</dbReference>
<dbReference type="CDD" id="cd00086">
    <property type="entry name" value="homeodomain"/>
    <property type="match status" value="1"/>
</dbReference>
<dbReference type="FunFam" id="1.10.10.60:FF:000210">
    <property type="entry name" value="homeobox protein goosecoid"/>
    <property type="match status" value="1"/>
</dbReference>
<dbReference type="Gene3D" id="1.10.10.60">
    <property type="entry name" value="Homeodomain-like"/>
    <property type="match status" value="1"/>
</dbReference>
<dbReference type="InterPro" id="IPR051440">
    <property type="entry name" value="Goosecoid-like_HB"/>
</dbReference>
<dbReference type="InterPro" id="IPR001356">
    <property type="entry name" value="HD"/>
</dbReference>
<dbReference type="InterPro" id="IPR017970">
    <property type="entry name" value="Homeobox_CS"/>
</dbReference>
<dbReference type="InterPro" id="IPR009057">
    <property type="entry name" value="Homeodomain-like_sf"/>
</dbReference>
<dbReference type="PANTHER" id="PTHR46643:SF2">
    <property type="entry name" value="HOMEOBOX PROTEIN GOOSECOID"/>
    <property type="match status" value="1"/>
</dbReference>
<dbReference type="PANTHER" id="PTHR46643">
    <property type="entry name" value="HOMEOBOX PROTEIN GOOSECOID-RELATED"/>
    <property type="match status" value="1"/>
</dbReference>
<dbReference type="Pfam" id="PF00046">
    <property type="entry name" value="Homeodomain"/>
    <property type="match status" value="1"/>
</dbReference>
<dbReference type="SMART" id="SM00389">
    <property type="entry name" value="HOX"/>
    <property type="match status" value="1"/>
</dbReference>
<dbReference type="SUPFAM" id="SSF46689">
    <property type="entry name" value="Homeodomain-like"/>
    <property type="match status" value="1"/>
</dbReference>
<dbReference type="PROSITE" id="PS00027">
    <property type="entry name" value="HOMEOBOX_1"/>
    <property type="match status" value="1"/>
</dbReference>
<dbReference type="PROSITE" id="PS50071">
    <property type="entry name" value="HOMEOBOX_2"/>
    <property type="match status" value="1"/>
</dbReference>
<gene>
    <name type="primary">gsc-a</name>
</gene>
<evidence type="ECO:0000255" key="1">
    <source>
        <dbReference type="PROSITE-ProRule" id="PRU00108"/>
    </source>
</evidence>
<evidence type="ECO:0000256" key="2">
    <source>
        <dbReference type="SAM" id="MobiDB-lite"/>
    </source>
</evidence>
<evidence type="ECO:0000269" key="3">
    <source>
    </source>
</evidence>
<evidence type="ECO:0000269" key="4">
    <source>
    </source>
</evidence>
<evidence type="ECO:0000269" key="5">
    <source>
    </source>
</evidence>
<evidence type="ECO:0000305" key="6"/>
<organism>
    <name type="scientific">Xenopus laevis</name>
    <name type="common">African clawed frog</name>
    <dbReference type="NCBI Taxonomy" id="8355"/>
    <lineage>
        <taxon>Eukaryota</taxon>
        <taxon>Metazoa</taxon>
        <taxon>Chordata</taxon>
        <taxon>Craniata</taxon>
        <taxon>Vertebrata</taxon>
        <taxon>Euteleostomi</taxon>
        <taxon>Amphibia</taxon>
        <taxon>Batrachia</taxon>
        <taxon>Anura</taxon>
        <taxon>Pipoidea</taxon>
        <taxon>Pipidae</taxon>
        <taxon>Xenopodinae</taxon>
        <taxon>Xenopus</taxon>
        <taxon>Xenopus</taxon>
    </lineage>
</organism>
<feature type="chain" id="PRO_0000048889" description="Homeobox protein goosecoid isoform A">
    <location>
        <begin position="1"/>
        <end position="243"/>
    </location>
</feature>
<feature type="DNA-binding region" description="Homeobox" evidence="1">
    <location>
        <begin position="148"/>
        <end position="207"/>
    </location>
</feature>
<feature type="region of interest" description="Disordered" evidence="2">
    <location>
        <begin position="201"/>
        <end position="243"/>
    </location>
</feature>
<feature type="compositionally biased region" description="Polar residues" evidence="2">
    <location>
        <begin position="217"/>
        <end position="226"/>
    </location>
</feature>
<feature type="compositionally biased region" description="Basic and acidic residues" evidence="2">
    <location>
        <begin position="227"/>
        <end position="243"/>
    </location>
</feature>
<reference key="1">
    <citation type="journal article" date="1991" name="Science">
        <title>Organizer-specific homeobox genes in Xenopus laevis embryos.</title>
        <authorList>
            <person name="Blumberg B."/>
            <person name="Wright C.V.E."/>
            <person name="De Robertis E.M."/>
            <person name="Cho K.W.Y."/>
        </authorList>
    </citation>
    <scope>NUCLEOTIDE SEQUENCE [MRNA]</scope>
    <source>
        <tissue>Gastrula</tissue>
    </source>
</reference>
<reference key="2">
    <citation type="journal article" date="1991" name="Cell">
        <title>Molecular nature of Spemann's organizer: the role of the Xenopus homeobox gene goosecoid.</title>
        <authorList>
            <person name="Cho K.W.Y."/>
            <person name="Blumberg B."/>
            <person name="Steinbeisser H."/>
            <person name="De Robertis E.M."/>
        </authorList>
    </citation>
    <scope>FUNCTION</scope>
    <scope>TISSUE SPECIFICITY</scope>
    <scope>INDUCTION</scope>
</reference>
<reference key="3">
    <citation type="journal article" date="1997" name="Development">
        <title>Functional differences among Xenopus nodal-related genes in left-right axis determination.</title>
        <authorList>
            <person name="Sampath K."/>
            <person name="Cheng A.M.S."/>
            <person name="Frisch A."/>
            <person name="Wright C.V.E."/>
        </authorList>
    </citation>
    <scope>INDUCTION</scope>
</reference>
<reference key="4">
    <citation type="journal article" date="1999" name="Development">
        <title>derriere: a TGF-beta family member required for posterior development in Xenopus.</title>
        <authorList>
            <person name="Sun B.I."/>
            <person name="Bush S.M."/>
            <person name="Collins-Racie L.A."/>
            <person name="LaVallie E.R."/>
            <person name="DiBlasio-Smith E.A."/>
            <person name="Wolfman N.M."/>
            <person name="McCoy J.M."/>
            <person name="Sive H.L."/>
        </authorList>
    </citation>
    <scope>INDUCTION</scope>
</reference>
<protein>
    <recommendedName>
        <fullName>Homeobox protein goosecoid isoform A</fullName>
    </recommendedName>
</protein>
<sequence length="243" mass="27397">MPSGMFSIDNILAARPRCKESVLLPQNGPVVFSSLGESLYGPADYSGFYNRAVAPTSTLQGVNGSRLGFNNYYYGQLHVQTHLGPSCCGTVQALGTQQCSCVPPATAYDGAGSVLMPPVPHQMLPYMNVGTLSRTELQLLNQLHCRRKRRHRTIFTDEQLEALENLFQETKYPDVGTREQLARRVHLREEKVEVWFKNRRAKWRRQKRSSSEESENAQKWNKSSKNSAEKADEQVKSDLDSDS</sequence>
<comment type="function">
    <text evidence="4">Plays a central role in executing Spemann's organizer phenomenon (the dorsal blastopore lip of the early Xenopus laevis gastrula can organize a complete secondary body axis when transplanted to another embryo).</text>
</comment>
<comment type="subcellular location">
    <subcellularLocation>
        <location>Nucleus</location>
    </subcellularLocation>
</comment>
<comment type="tissue specificity">
    <text evidence="4">At the start of gastrulation, it is found in a patch of cells encompassing 60 degrees of arc on the dorsal marginal zone.</text>
</comment>
<comment type="induction">
    <text evidence="3 4 5">Induced by activin (even in the absence of protein synthesis), lithium chloride, nodal/nr-1, nodal2/nr-2 and derriere. Not affected by basic fibroblast growth factor, and repressed by retinoic acid, and by UV light.</text>
</comment>
<comment type="similarity">
    <text evidence="6">Belongs to the paired homeobox family. Bicoid subfamily.</text>
</comment>
<comment type="sequence caution" evidence="6">
    <conflict type="erroneous initiation">
        <sequence resource="EMBL-CDS" id="AAA49744"/>
    </conflict>
</comment>
<keyword id="KW-0217">Developmental protein</keyword>
<keyword id="KW-0238">DNA-binding</keyword>
<keyword id="KW-0371">Homeobox</keyword>
<keyword id="KW-0539">Nucleus</keyword>
<keyword id="KW-1185">Reference proteome</keyword>